<feature type="chain" id="PRO_0000430695" description="3-methyl-L-tyrosine peroxygenase">
    <location>
        <begin position="1"/>
        <end position="365"/>
    </location>
</feature>
<feature type="binding site" evidence="2">
    <location>
        <begin position="313"/>
        <end position="317"/>
    </location>
    <ligand>
        <name>heme</name>
        <dbReference type="ChEBI" id="CHEBI:30413"/>
    </ligand>
</feature>
<feature type="mutagenesis site" description="Does not affect heme-binding." evidence="2">
    <original>H</original>
    <variation>A</variation>
    <location>
        <position position="191"/>
    </location>
</feature>
<feature type="mutagenesis site" description="Does not affect heme-binding." evidence="2">
    <original>H</original>
    <variation>A</variation>
    <location>
        <position position="274"/>
    </location>
</feature>
<feature type="mutagenesis site" description="Almost abolishes heme-binding." evidence="2">
    <original>H</original>
    <variation>A</variation>
    <location>
        <position position="313"/>
    </location>
</feature>
<feature type="mutagenesis site" description="Almost abolishes heme-binding." evidence="2">
    <original>C</original>
    <variation>A</variation>
    <location>
        <position position="317"/>
    </location>
</feature>
<feature type="turn" evidence="6">
    <location>
        <begin position="18"/>
        <end position="20"/>
    </location>
</feature>
<feature type="strand" evidence="6">
    <location>
        <begin position="25"/>
        <end position="27"/>
    </location>
</feature>
<feature type="helix" evidence="6">
    <location>
        <begin position="30"/>
        <end position="32"/>
    </location>
</feature>
<feature type="helix" evidence="6">
    <location>
        <begin position="37"/>
        <end position="55"/>
    </location>
</feature>
<feature type="turn" evidence="6">
    <location>
        <begin position="58"/>
        <end position="61"/>
    </location>
</feature>
<feature type="helix" evidence="6">
    <location>
        <begin position="64"/>
        <end position="77"/>
    </location>
</feature>
<feature type="helix" evidence="6">
    <location>
        <begin position="94"/>
        <end position="102"/>
    </location>
</feature>
<feature type="strand" evidence="6">
    <location>
        <begin position="105"/>
        <end position="108"/>
    </location>
</feature>
<feature type="helix" evidence="6">
    <location>
        <begin position="112"/>
        <end position="134"/>
    </location>
</feature>
<feature type="helix" evidence="6">
    <location>
        <begin position="140"/>
        <end position="158"/>
    </location>
</feature>
<feature type="helix" evidence="6">
    <location>
        <begin position="182"/>
        <end position="213"/>
    </location>
</feature>
<feature type="helix" evidence="6">
    <location>
        <begin position="217"/>
        <end position="251"/>
    </location>
</feature>
<feature type="helix" evidence="6">
    <location>
        <begin position="272"/>
        <end position="283"/>
    </location>
</feature>
<feature type="helix" evidence="6">
    <location>
        <begin position="285"/>
        <end position="293"/>
    </location>
</feature>
<feature type="helix" evidence="6">
    <location>
        <begin position="298"/>
        <end position="311"/>
    </location>
</feature>
<feature type="turn" evidence="6">
    <location>
        <begin position="312"/>
        <end position="316"/>
    </location>
</feature>
<proteinExistence type="evidence at protein level"/>
<comment type="function">
    <text evidence="1 2">Heme-containing peroxygenase that mediates the hydroxylation of 3-methyl-L-tyrosine (3-Me-Tyr) into 3-hydroxy-5-methyl-L-tyrosine (3-OH-5-Me-Tyr) in biosynthesis of saframycin A, a potent antitumor antibiotic that belongs to the tetrahydroisoquinoline family. Involved in biosynthesis of 3-hydroxy-5-methyl-O-methyltyrosine (3-OH-5-Me-OMe-Tyr), a core structure of saframycin A.</text>
</comment>
<comment type="catalytic activity">
    <reaction evidence="2">
        <text>3-methyl-L-tyrosine + H2O2 = 5-hydroxy-3-methyl-L-tyrosine + H2O</text>
        <dbReference type="Rhea" id="RHEA:41432"/>
        <dbReference type="ChEBI" id="CHEBI:15377"/>
        <dbReference type="ChEBI" id="CHEBI:16240"/>
        <dbReference type="ChEBI" id="CHEBI:78239"/>
        <dbReference type="ChEBI" id="CHEBI:78241"/>
        <dbReference type="EC" id="1.11.2.5"/>
    </reaction>
</comment>
<comment type="cofactor">
    <cofactor evidence="2">
        <name>heme</name>
        <dbReference type="ChEBI" id="CHEBI:30413"/>
    </cofactor>
    <text evidence="2">Binds 1 heme group per subunit.</text>
</comment>
<comment type="biophysicochemical properties">
    <kinetics>
        <KM evidence="2">0.64 mM for 3-methyl-L-tyrosine</KM>
        <KM evidence="2">1 mM for tyrosine</KM>
        <text evidence="2">kcat is 17.8 min(-1) with 3-methyl-L-tyrosine as substrate. kcat is 12.3 min(-1) with L-tyrosine as substrate.</text>
    </kinetics>
    <phDependence>
        <text evidence="2">Optimum pH is 9.0.</text>
    </phDependence>
</comment>
<comment type="pathway">
    <text evidence="1 2">Antibiotic biosynthesis.</text>
</comment>
<name>SFMD_STRLA</name>
<sequence length="365" mass="38191">MTAPADTVHPAGQPDYVAQVATVPFRLGRPEELPGTLDELRAAVSARAGEAVRGLNRPGARTDLAALLAATERTRAALAPVGAGPVGDDPSESEANRDNDLAFGIVRTRGPVAELLVDAALAALAGILEVAVDRGSDLEDAAWQRFIGGFDALLGWLADPHSAPRPATVPGAGPAGPPVHQDALRRWVRGHHVFMVLAQGCALATACLRDSAARGDLPGAEASAAAAEALMRGCQGALLYAGDANREQYNEQIRPTLMPPVAPPKMSGLHWRDHEVLIKELAGSRDAWEWLSAQGSERPATFRAALAETYDSHIGVCGHFVGDQSPSLLAAQGSTRSAVGVIGQFRKIRLSALPEQPATQQGEPS</sequence>
<accession>B0CN28</accession>
<dbReference type="EC" id="1.11.2.5" evidence="2"/>
<dbReference type="EMBL" id="DQ838002">
    <property type="protein sequence ID" value="ABI22134.1"/>
    <property type="molecule type" value="Genomic_DNA"/>
</dbReference>
<dbReference type="PDB" id="6VDP">
    <property type="method" value="X-ray"/>
    <property type="resolution" value="2.00 A"/>
    <property type="chains" value="A=1-365"/>
</dbReference>
<dbReference type="PDB" id="6VDQ">
    <property type="method" value="X-ray"/>
    <property type="resolution" value="1.78 A"/>
    <property type="chains" value="A=1-365"/>
</dbReference>
<dbReference type="PDB" id="6VDZ">
    <property type="method" value="X-ray"/>
    <property type="resolution" value="2.95 A"/>
    <property type="chains" value="A=1-365"/>
</dbReference>
<dbReference type="PDB" id="6VE0">
    <property type="method" value="X-ray"/>
    <property type="resolution" value="3.15 A"/>
    <property type="chains" value="A=1-365"/>
</dbReference>
<dbReference type="PDBsum" id="6VDP"/>
<dbReference type="PDBsum" id="6VDQ"/>
<dbReference type="PDBsum" id="6VDZ"/>
<dbReference type="PDBsum" id="6VE0"/>
<dbReference type="SMR" id="B0CN28"/>
<dbReference type="KEGG" id="ag:ABI22134"/>
<dbReference type="BioCyc" id="MetaCyc:MONOMER-19337"/>
<dbReference type="BRENDA" id="1.11.2.5">
    <property type="organism ID" value="133"/>
</dbReference>
<dbReference type="GO" id="GO:0046872">
    <property type="term" value="F:metal ion binding"/>
    <property type="evidence" value="ECO:0007669"/>
    <property type="project" value="UniProtKB-KW"/>
</dbReference>
<dbReference type="GO" id="GO:0016491">
    <property type="term" value="F:oxidoreductase activity"/>
    <property type="evidence" value="ECO:0007669"/>
    <property type="project" value="UniProtKB-KW"/>
</dbReference>
<dbReference type="GO" id="GO:0017000">
    <property type="term" value="P:antibiotic biosynthetic process"/>
    <property type="evidence" value="ECO:0007669"/>
    <property type="project" value="UniProtKB-KW"/>
</dbReference>
<dbReference type="InterPro" id="IPR036271">
    <property type="entry name" value="Tet_transcr_reg_TetR-rel_C_sf"/>
</dbReference>
<dbReference type="SUPFAM" id="SSF48498">
    <property type="entry name" value="Tetracyclin repressor-like, C-terminal domain"/>
    <property type="match status" value="1"/>
</dbReference>
<gene>
    <name evidence="3" type="primary">sfmD</name>
</gene>
<organism evidence="5">
    <name type="scientific">Streptomyces lavendulae</name>
    <dbReference type="NCBI Taxonomy" id="1914"/>
    <lineage>
        <taxon>Bacteria</taxon>
        <taxon>Bacillati</taxon>
        <taxon>Actinomycetota</taxon>
        <taxon>Actinomycetes</taxon>
        <taxon>Kitasatosporales</taxon>
        <taxon>Streptomycetaceae</taxon>
        <taxon>Streptomyces</taxon>
    </lineage>
</organism>
<evidence type="ECO:0000269" key="1">
    <source>
    </source>
</evidence>
<evidence type="ECO:0000269" key="2">
    <source>
    </source>
</evidence>
<evidence type="ECO:0000303" key="3">
    <source>
    </source>
</evidence>
<evidence type="ECO:0000305" key="4"/>
<evidence type="ECO:0000312" key="5">
    <source>
        <dbReference type="EMBL" id="ABI22134.1"/>
    </source>
</evidence>
<evidence type="ECO:0007829" key="6">
    <source>
        <dbReference type="PDB" id="6VDQ"/>
    </source>
</evidence>
<reference key="1">
    <citation type="journal article" date="2008" name="J. Bacteriol.">
        <title>Characterization of the saframycin A gene cluster from Streptomyces lavendulae NRRL 11002 revealing a nonribosomal peptide synthetase system for assembling the unusual tetrapeptidyl skeleton in an iterative manner.</title>
        <authorList>
            <person name="Li L."/>
            <person name="Deng W."/>
            <person name="Song J."/>
            <person name="Ding W."/>
            <person name="Zhao Q.F."/>
            <person name="Peng C."/>
            <person name="Song W.W."/>
            <person name="Tang G.L."/>
            <person name="Liu W."/>
        </authorList>
    </citation>
    <scope>NUCLEOTIDE SEQUENCE [GENOMIC DNA]</scope>
    <source>
        <strain evidence="5">NRRL 11002</strain>
    </source>
</reference>
<reference key="2">
    <citation type="journal article" date="2009" name="J. Microbiol. Biotechnol.">
        <title>Biosynthesis of 3-hydroxy-5-methyl-o-methyltyrosine in the saframycin/ safracin biosynthetic pathway.</title>
        <authorList>
            <person name="Fu C.Y."/>
            <person name="Tang M.C."/>
            <person name="Peng C."/>
            <person name="Li L."/>
            <person name="He Y.L."/>
            <person name="Liu W."/>
            <person name="Tang G.L."/>
        </authorList>
    </citation>
    <scope>FUNCTION</scope>
    <scope>PATHWAY</scope>
</reference>
<reference key="3">
    <citation type="journal article" date="2012" name="J. Biol. Chem.">
        <title>Characterization of SfmD as a heme peroxidase that catalyzes the regioselective hydroxylation of 3-methyltyrosine to 3-hydroxy-5-methyltyrosine in saframycin A biosynthesis.</title>
        <authorList>
            <person name="Tang M.C."/>
            <person name="Fu C.Y."/>
            <person name="Tang G.L."/>
        </authorList>
    </citation>
    <scope>FUNCTION</scope>
    <scope>CATALYTIC ACTIVITY</scope>
    <scope>COFACTOR</scope>
    <scope>PATHWAY</scope>
    <scope>MUTAGENESIS OF HIS-191; HIS-274; HIS-313 AND CYS-317</scope>
</reference>
<protein>
    <recommendedName>
        <fullName evidence="4">3-methyl-L-tyrosine peroxygenase</fullName>
        <ecNumber evidence="2">1.11.2.5</ecNumber>
    </recommendedName>
</protein>
<keyword id="KW-0002">3D-structure</keyword>
<keyword id="KW-0045">Antibiotic biosynthesis</keyword>
<keyword id="KW-0349">Heme</keyword>
<keyword id="KW-0408">Iron</keyword>
<keyword id="KW-0479">Metal-binding</keyword>
<keyword id="KW-0560">Oxidoreductase</keyword>